<comment type="function">
    <text evidence="1">With S4 and S12 plays an important role in translational accuracy.</text>
</comment>
<comment type="function">
    <text evidence="1">Located at the back of the 30S subunit body where it stabilizes the conformation of the head with respect to the body.</text>
</comment>
<comment type="subunit">
    <text evidence="1">Part of the 30S ribosomal subunit. Contacts proteins S4 and S8.</text>
</comment>
<comment type="domain">
    <text>The N-terminal domain interacts with the head of the 30S subunit; the C-terminal domain interacts with the body and contacts protein S4. The interaction surface between S4 and S5 is involved in control of translational fidelity.</text>
</comment>
<comment type="similarity">
    <text evidence="1">Belongs to the universal ribosomal protein uS5 family.</text>
</comment>
<reference key="1">
    <citation type="journal article" date="2009" name="Environ. Microbiol.">
        <title>The genome of Polaromonas naphthalenivorans strain CJ2, isolated from coal tar-contaminated sediment, reveals physiological and metabolic versatility and evolution through extensive horizontal gene transfer.</title>
        <authorList>
            <person name="Yagi J.M."/>
            <person name="Sims D."/>
            <person name="Brettin T."/>
            <person name="Bruce D."/>
            <person name="Madsen E.L."/>
        </authorList>
    </citation>
    <scope>NUCLEOTIDE SEQUENCE [LARGE SCALE GENOMIC DNA]</scope>
    <source>
        <strain>CJ2</strain>
    </source>
</reference>
<protein>
    <recommendedName>
        <fullName evidence="1">Small ribosomal subunit protein uS5</fullName>
    </recommendedName>
    <alternativeName>
        <fullName evidence="2">30S ribosomal protein S5</fullName>
    </alternativeName>
</protein>
<organism>
    <name type="scientific">Polaromonas naphthalenivorans (strain CJ2)</name>
    <dbReference type="NCBI Taxonomy" id="365044"/>
    <lineage>
        <taxon>Bacteria</taxon>
        <taxon>Pseudomonadati</taxon>
        <taxon>Pseudomonadota</taxon>
        <taxon>Betaproteobacteria</taxon>
        <taxon>Burkholderiales</taxon>
        <taxon>Comamonadaceae</taxon>
        <taxon>Polaromonas</taxon>
    </lineage>
</organism>
<proteinExistence type="inferred from homology"/>
<gene>
    <name evidence="1" type="primary">rpsE</name>
    <name type="ordered locus">Pnap_0337</name>
</gene>
<keyword id="KW-1185">Reference proteome</keyword>
<keyword id="KW-0687">Ribonucleoprotein</keyword>
<keyword id="KW-0689">Ribosomal protein</keyword>
<keyword id="KW-0694">RNA-binding</keyword>
<keyword id="KW-0699">rRNA-binding</keyword>
<dbReference type="EMBL" id="CP000529">
    <property type="protein sequence ID" value="ABM35660.1"/>
    <property type="molecule type" value="Genomic_DNA"/>
</dbReference>
<dbReference type="RefSeq" id="WP_011799766.1">
    <property type="nucleotide sequence ID" value="NC_008781.1"/>
</dbReference>
<dbReference type="SMR" id="A1VJ32"/>
<dbReference type="STRING" id="365044.Pnap_0337"/>
<dbReference type="KEGG" id="pna:Pnap_0337"/>
<dbReference type="eggNOG" id="COG0098">
    <property type="taxonomic scope" value="Bacteria"/>
</dbReference>
<dbReference type="HOGENOM" id="CLU_065898_2_2_4"/>
<dbReference type="OrthoDB" id="9809045at2"/>
<dbReference type="Proteomes" id="UP000000644">
    <property type="component" value="Chromosome"/>
</dbReference>
<dbReference type="GO" id="GO:0015935">
    <property type="term" value="C:small ribosomal subunit"/>
    <property type="evidence" value="ECO:0007669"/>
    <property type="project" value="InterPro"/>
</dbReference>
<dbReference type="GO" id="GO:0019843">
    <property type="term" value="F:rRNA binding"/>
    <property type="evidence" value="ECO:0007669"/>
    <property type="project" value="UniProtKB-UniRule"/>
</dbReference>
<dbReference type="GO" id="GO:0003735">
    <property type="term" value="F:structural constituent of ribosome"/>
    <property type="evidence" value="ECO:0007669"/>
    <property type="project" value="InterPro"/>
</dbReference>
<dbReference type="GO" id="GO:0006412">
    <property type="term" value="P:translation"/>
    <property type="evidence" value="ECO:0007669"/>
    <property type="project" value="UniProtKB-UniRule"/>
</dbReference>
<dbReference type="FunFam" id="3.30.160.20:FF:000001">
    <property type="entry name" value="30S ribosomal protein S5"/>
    <property type="match status" value="1"/>
</dbReference>
<dbReference type="FunFam" id="3.30.230.10:FF:000002">
    <property type="entry name" value="30S ribosomal protein S5"/>
    <property type="match status" value="1"/>
</dbReference>
<dbReference type="Gene3D" id="3.30.160.20">
    <property type="match status" value="1"/>
</dbReference>
<dbReference type="Gene3D" id="3.30.230.10">
    <property type="match status" value="1"/>
</dbReference>
<dbReference type="HAMAP" id="MF_01307_B">
    <property type="entry name" value="Ribosomal_uS5_B"/>
    <property type="match status" value="1"/>
</dbReference>
<dbReference type="InterPro" id="IPR020568">
    <property type="entry name" value="Ribosomal_Su5_D2-typ_SF"/>
</dbReference>
<dbReference type="InterPro" id="IPR000851">
    <property type="entry name" value="Ribosomal_uS5"/>
</dbReference>
<dbReference type="InterPro" id="IPR005712">
    <property type="entry name" value="Ribosomal_uS5_bac-type"/>
</dbReference>
<dbReference type="InterPro" id="IPR005324">
    <property type="entry name" value="Ribosomal_uS5_C"/>
</dbReference>
<dbReference type="InterPro" id="IPR013810">
    <property type="entry name" value="Ribosomal_uS5_N"/>
</dbReference>
<dbReference type="InterPro" id="IPR018192">
    <property type="entry name" value="Ribosomal_uS5_N_CS"/>
</dbReference>
<dbReference type="InterPro" id="IPR014721">
    <property type="entry name" value="Ribsml_uS5_D2-typ_fold_subgr"/>
</dbReference>
<dbReference type="NCBIfam" id="TIGR01021">
    <property type="entry name" value="rpsE_bact"/>
    <property type="match status" value="1"/>
</dbReference>
<dbReference type="PANTHER" id="PTHR48277">
    <property type="entry name" value="MITOCHONDRIAL RIBOSOMAL PROTEIN S5"/>
    <property type="match status" value="1"/>
</dbReference>
<dbReference type="PANTHER" id="PTHR48277:SF1">
    <property type="entry name" value="MITOCHONDRIAL RIBOSOMAL PROTEIN S5"/>
    <property type="match status" value="1"/>
</dbReference>
<dbReference type="Pfam" id="PF00333">
    <property type="entry name" value="Ribosomal_S5"/>
    <property type="match status" value="1"/>
</dbReference>
<dbReference type="Pfam" id="PF03719">
    <property type="entry name" value="Ribosomal_S5_C"/>
    <property type="match status" value="1"/>
</dbReference>
<dbReference type="SUPFAM" id="SSF54768">
    <property type="entry name" value="dsRNA-binding domain-like"/>
    <property type="match status" value="1"/>
</dbReference>
<dbReference type="SUPFAM" id="SSF54211">
    <property type="entry name" value="Ribosomal protein S5 domain 2-like"/>
    <property type="match status" value="1"/>
</dbReference>
<dbReference type="PROSITE" id="PS00585">
    <property type="entry name" value="RIBOSOMAL_S5"/>
    <property type="match status" value="1"/>
</dbReference>
<dbReference type="PROSITE" id="PS50881">
    <property type="entry name" value="S5_DSRBD"/>
    <property type="match status" value="1"/>
</dbReference>
<feature type="chain" id="PRO_0000323168" description="Small ribosomal subunit protein uS5">
    <location>
        <begin position="1"/>
        <end position="172"/>
    </location>
</feature>
<feature type="domain" description="S5 DRBM" evidence="1">
    <location>
        <begin position="17"/>
        <end position="80"/>
    </location>
</feature>
<accession>A1VJ32</accession>
<evidence type="ECO:0000255" key="1">
    <source>
        <dbReference type="HAMAP-Rule" id="MF_01307"/>
    </source>
</evidence>
<evidence type="ECO:0000305" key="2"/>
<sequence>MAKFQAKSQNDAPDDGLKEKMIAINRVTKVVKGGRILGFAALTVVGDGDGRVGMGKGKSKEVPAAVQKAMEEARRNMTKVSLKNGTLHHNVFGHHGAANVMMAPAPKGTGIIAGGPMRAVFEVMGITDIVAKSHGSSNPYNMVRATMDALKNSTTASDIAAKRGKSVEEIFG</sequence>
<name>RS5_POLNA</name>